<feature type="chain" id="PRO_0000268342" description="Bifunctional protein FolD">
    <location>
        <begin position="1"/>
        <end position="300"/>
    </location>
</feature>
<feature type="binding site" evidence="1">
    <location>
        <begin position="168"/>
        <end position="170"/>
    </location>
    <ligand>
        <name>NADP(+)</name>
        <dbReference type="ChEBI" id="CHEBI:58349"/>
    </ligand>
</feature>
<feature type="binding site" evidence="1">
    <location>
        <position position="193"/>
    </location>
    <ligand>
        <name>NADP(+)</name>
        <dbReference type="ChEBI" id="CHEBI:58349"/>
    </ligand>
</feature>
<feature type="binding site" evidence="1">
    <location>
        <position position="234"/>
    </location>
    <ligand>
        <name>NADP(+)</name>
        <dbReference type="ChEBI" id="CHEBI:58349"/>
    </ligand>
</feature>
<keyword id="KW-0028">Amino-acid biosynthesis</keyword>
<keyword id="KW-0368">Histidine biosynthesis</keyword>
<keyword id="KW-0378">Hydrolase</keyword>
<keyword id="KW-0486">Methionine biosynthesis</keyword>
<keyword id="KW-0511">Multifunctional enzyme</keyword>
<keyword id="KW-0521">NADP</keyword>
<keyword id="KW-0554">One-carbon metabolism</keyword>
<keyword id="KW-0560">Oxidoreductase</keyword>
<keyword id="KW-0658">Purine biosynthesis</keyword>
<sequence>MEGNIVSGKAVADNITNILATCISDLKVQHNLTPCLIVVLVGDDPASQLYVRNKQRKAEMLGLRSETMLLPSTISESSLIEKIHQLNNDDSVHGILVQLPVPRHIDKNLIINTIDPKKDVDGFHNENVGRLFTGQKKNCLVPCTPQGCLYLIKTITRNLSGSDAVVIGRSNIVGKPMACLLLGENCTVTTVHSATRDLPDYCRRADILVAAVGIPRFVKYSWVKHGAIVIDVGINSIEEDGVKKFVGDVDFAEVNKIASAITPVPGGVGPMTIAFLMVNTIIAACNQSGIHGFLEKYLDL</sequence>
<comment type="function">
    <text evidence="1">Catalyzes the oxidation of 5,10-methylenetetrahydrofolate to 5,10-methenyltetrahydrofolate and then the hydrolysis of 5,10-methenyltetrahydrofolate to 10-formyltetrahydrofolate.</text>
</comment>
<comment type="catalytic activity">
    <reaction evidence="1">
        <text>(6R)-5,10-methylene-5,6,7,8-tetrahydrofolate + NADP(+) = (6R)-5,10-methenyltetrahydrofolate + NADPH</text>
        <dbReference type="Rhea" id="RHEA:22812"/>
        <dbReference type="ChEBI" id="CHEBI:15636"/>
        <dbReference type="ChEBI" id="CHEBI:57455"/>
        <dbReference type="ChEBI" id="CHEBI:57783"/>
        <dbReference type="ChEBI" id="CHEBI:58349"/>
        <dbReference type="EC" id="1.5.1.5"/>
    </reaction>
</comment>
<comment type="catalytic activity">
    <reaction evidence="1">
        <text>(6R)-5,10-methenyltetrahydrofolate + H2O = (6R)-10-formyltetrahydrofolate + H(+)</text>
        <dbReference type="Rhea" id="RHEA:23700"/>
        <dbReference type="ChEBI" id="CHEBI:15377"/>
        <dbReference type="ChEBI" id="CHEBI:15378"/>
        <dbReference type="ChEBI" id="CHEBI:57455"/>
        <dbReference type="ChEBI" id="CHEBI:195366"/>
        <dbReference type="EC" id="3.5.4.9"/>
    </reaction>
</comment>
<comment type="pathway">
    <text evidence="1">One-carbon metabolism; tetrahydrofolate interconversion.</text>
</comment>
<comment type="subunit">
    <text evidence="1">Homodimer.</text>
</comment>
<comment type="similarity">
    <text evidence="1">Belongs to the tetrahydrofolate dehydrogenase/cyclohydrolase family.</text>
</comment>
<organism>
    <name type="scientific">Ehrlichia ruminantium (strain Gardel)</name>
    <dbReference type="NCBI Taxonomy" id="302409"/>
    <lineage>
        <taxon>Bacteria</taxon>
        <taxon>Pseudomonadati</taxon>
        <taxon>Pseudomonadota</taxon>
        <taxon>Alphaproteobacteria</taxon>
        <taxon>Rickettsiales</taxon>
        <taxon>Anaplasmataceae</taxon>
        <taxon>Ehrlichia</taxon>
    </lineage>
</organism>
<protein>
    <recommendedName>
        <fullName evidence="1">Bifunctional protein FolD</fullName>
    </recommendedName>
    <domain>
        <recommendedName>
            <fullName evidence="1">Methylenetetrahydrofolate dehydrogenase</fullName>
            <ecNumber evidence="1">1.5.1.5</ecNumber>
        </recommendedName>
    </domain>
    <domain>
        <recommendedName>
            <fullName evidence="1">Methenyltetrahydrofolate cyclohydrolase</fullName>
            <ecNumber evidence="1">3.5.4.9</ecNumber>
        </recommendedName>
    </domain>
</protein>
<proteinExistence type="inferred from homology"/>
<evidence type="ECO:0000255" key="1">
    <source>
        <dbReference type="HAMAP-Rule" id="MF_01576"/>
    </source>
</evidence>
<reference key="1">
    <citation type="journal article" date="2006" name="J. Bacteriol.">
        <title>Comparative genomic analysis of three strains of Ehrlichia ruminantium reveals an active process of genome size plasticity.</title>
        <authorList>
            <person name="Frutos R."/>
            <person name="Viari A."/>
            <person name="Ferraz C."/>
            <person name="Morgat A."/>
            <person name="Eychenie S."/>
            <person name="Kandassamy Y."/>
            <person name="Chantal I."/>
            <person name="Bensaid A."/>
            <person name="Coissac E."/>
            <person name="Vachiery N."/>
            <person name="Demaille J."/>
            <person name="Martinez D."/>
        </authorList>
    </citation>
    <scope>NUCLEOTIDE SEQUENCE [LARGE SCALE GENOMIC DNA]</scope>
    <source>
        <strain>Gardel</strain>
    </source>
</reference>
<gene>
    <name evidence="1" type="primary">folD</name>
    <name type="ordered locus">ERGA_CDS_06980</name>
</gene>
<accession>Q5FG00</accession>
<dbReference type="EC" id="1.5.1.5" evidence="1"/>
<dbReference type="EC" id="3.5.4.9" evidence="1"/>
<dbReference type="EMBL" id="CR925677">
    <property type="protein sequence ID" value="CAI28150.1"/>
    <property type="molecule type" value="Genomic_DNA"/>
</dbReference>
<dbReference type="RefSeq" id="WP_011255782.1">
    <property type="nucleotide sequence ID" value="NC_006831.1"/>
</dbReference>
<dbReference type="SMR" id="Q5FG00"/>
<dbReference type="KEGG" id="erg:ERGA_CDS_06980"/>
<dbReference type="HOGENOM" id="CLU_034045_1_2_5"/>
<dbReference type="OrthoDB" id="9803580at2"/>
<dbReference type="UniPathway" id="UPA00193"/>
<dbReference type="Proteomes" id="UP000000533">
    <property type="component" value="Chromosome"/>
</dbReference>
<dbReference type="GO" id="GO:0005829">
    <property type="term" value="C:cytosol"/>
    <property type="evidence" value="ECO:0007669"/>
    <property type="project" value="TreeGrafter"/>
</dbReference>
<dbReference type="GO" id="GO:0004477">
    <property type="term" value="F:methenyltetrahydrofolate cyclohydrolase activity"/>
    <property type="evidence" value="ECO:0007669"/>
    <property type="project" value="UniProtKB-UniRule"/>
</dbReference>
<dbReference type="GO" id="GO:0004488">
    <property type="term" value="F:methylenetetrahydrofolate dehydrogenase (NADP+) activity"/>
    <property type="evidence" value="ECO:0007669"/>
    <property type="project" value="UniProtKB-UniRule"/>
</dbReference>
<dbReference type="GO" id="GO:0000105">
    <property type="term" value="P:L-histidine biosynthetic process"/>
    <property type="evidence" value="ECO:0007669"/>
    <property type="project" value="UniProtKB-KW"/>
</dbReference>
<dbReference type="GO" id="GO:0009086">
    <property type="term" value="P:methionine biosynthetic process"/>
    <property type="evidence" value="ECO:0007669"/>
    <property type="project" value="UniProtKB-KW"/>
</dbReference>
<dbReference type="GO" id="GO:0006164">
    <property type="term" value="P:purine nucleotide biosynthetic process"/>
    <property type="evidence" value="ECO:0007669"/>
    <property type="project" value="UniProtKB-KW"/>
</dbReference>
<dbReference type="GO" id="GO:0035999">
    <property type="term" value="P:tetrahydrofolate interconversion"/>
    <property type="evidence" value="ECO:0007669"/>
    <property type="project" value="UniProtKB-UniRule"/>
</dbReference>
<dbReference type="CDD" id="cd01080">
    <property type="entry name" value="NAD_bind_m-THF_DH_Cyclohyd"/>
    <property type="match status" value="1"/>
</dbReference>
<dbReference type="FunFam" id="3.40.50.720:FF:000006">
    <property type="entry name" value="Bifunctional protein FolD"/>
    <property type="match status" value="1"/>
</dbReference>
<dbReference type="FunFam" id="3.40.50.10860:FF:000005">
    <property type="entry name" value="C-1-tetrahydrofolate synthase, cytoplasmic, putative"/>
    <property type="match status" value="1"/>
</dbReference>
<dbReference type="Gene3D" id="3.40.50.10860">
    <property type="entry name" value="Leucine Dehydrogenase, chain A, domain 1"/>
    <property type="match status" value="1"/>
</dbReference>
<dbReference type="Gene3D" id="3.40.50.720">
    <property type="entry name" value="NAD(P)-binding Rossmann-like Domain"/>
    <property type="match status" value="1"/>
</dbReference>
<dbReference type="HAMAP" id="MF_01576">
    <property type="entry name" value="THF_DHG_CYH"/>
    <property type="match status" value="1"/>
</dbReference>
<dbReference type="InterPro" id="IPR046346">
    <property type="entry name" value="Aminoacid_DH-like_N_sf"/>
</dbReference>
<dbReference type="InterPro" id="IPR036291">
    <property type="entry name" value="NAD(P)-bd_dom_sf"/>
</dbReference>
<dbReference type="InterPro" id="IPR000672">
    <property type="entry name" value="THF_DH/CycHdrlase"/>
</dbReference>
<dbReference type="InterPro" id="IPR020630">
    <property type="entry name" value="THF_DH/CycHdrlase_cat_dom"/>
</dbReference>
<dbReference type="InterPro" id="IPR020867">
    <property type="entry name" value="THF_DH/CycHdrlase_CS"/>
</dbReference>
<dbReference type="InterPro" id="IPR020631">
    <property type="entry name" value="THF_DH/CycHdrlase_NAD-bd_dom"/>
</dbReference>
<dbReference type="NCBIfam" id="NF010784">
    <property type="entry name" value="PRK14187.1"/>
    <property type="match status" value="1"/>
</dbReference>
<dbReference type="NCBIfam" id="NF010785">
    <property type="entry name" value="PRK14188.1"/>
    <property type="match status" value="1"/>
</dbReference>
<dbReference type="PANTHER" id="PTHR48099:SF5">
    <property type="entry name" value="C-1-TETRAHYDROFOLATE SYNTHASE, CYTOPLASMIC"/>
    <property type="match status" value="1"/>
</dbReference>
<dbReference type="PANTHER" id="PTHR48099">
    <property type="entry name" value="C-1-TETRAHYDROFOLATE SYNTHASE, CYTOPLASMIC-RELATED"/>
    <property type="match status" value="1"/>
</dbReference>
<dbReference type="Pfam" id="PF00763">
    <property type="entry name" value="THF_DHG_CYH"/>
    <property type="match status" value="1"/>
</dbReference>
<dbReference type="Pfam" id="PF02882">
    <property type="entry name" value="THF_DHG_CYH_C"/>
    <property type="match status" value="1"/>
</dbReference>
<dbReference type="PRINTS" id="PR00085">
    <property type="entry name" value="THFDHDRGNASE"/>
</dbReference>
<dbReference type="SUPFAM" id="SSF53223">
    <property type="entry name" value="Aminoacid dehydrogenase-like, N-terminal domain"/>
    <property type="match status" value="1"/>
</dbReference>
<dbReference type="SUPFAM" id="SSF51735">
    <property type="entry name" value="NAD(P)-binding Rossmann-fold domains"/>
    <property type="match status" value="1"/>
</dbReference>
<dbReference type="PROSITE" id="PS00766">
    <property type="entry name" value="THF_DHG_CYH_1"/>
    <property type="match status" value="1"/>
</dbReference>
<dbReference type="PROSITE" id="PS00767">
    <property type="entry name" value="THF_DHG_CYH_2"/>
    <property type="match status" value="1"/>
</dbReference>
<name>FOLD_EHRRG</name>